<protein>
    <recommendedName>
        <fullName>Opioid growth factor receptor</fullName>
        <shortName>OGFr</shortName>
    </recommendedName>
    <alternativeName>
        <fullName>Zeta-type opioid receptor</fullName>
    </alternativeName>
</protein>
<proteinExistence type="evidence at protein level"/>
<sequence>MDDPECDSTWEDESEEDGEDGQADDTTDEDTGDDDGDAEEARPSLFQSRMTRYRNWRAMQDMQRYRHNYPDLTDQDCNGDMCNLSFYKNEICFQPNGFLIEDILQNWKDNYDLLEENHSYIQWLFPLREPGVNWHAKPLTLKEVEAFKSSKEVRERLVRAYELMLGFYGIQLEDRNTGAVCRAQNFQPRFHNLNSHSHNNLRITRILKSLGELGLEHYQAPLVRFFLEETLVQHKLPSVRQSALDYFLFAVRCRHQRRELVHFAWEHFKPRREFVWGPRDKLRRFRPQTISRPLMGLGQADKDEGPGDPSQEAGTQGRTCGSGRDLSGDSGTAEDLSLLSAKPQDVGTLDGDQRHEAKSPSPKESKKRKLEGNRQEQVPGEPDPQGVSEVEKIALNLEGCALSPTSQEPREAEQPCLVARVANEVRKRRKVEEGAEGDGVASNTQVQASALSPTPSECPESQKDGNGPEDPKSQVGPEDPKSQVGPEDPKSQVGPEDPKSQVGPEDPKGQVEPEDPKGQVGPEDPKGQVGPEDPKGQVGPEDPKSQVGPEDPKSQVEPEDPKSQVEPEDPKSQVEPEDPKSQVGPEDPQSQVGPEQAASKSLGEDPDSDTTGTSMSESEELARIEASVEPPKP</sequence>
<keyword id="KW-0007">Acetylation</keyword>
<keyword id="KW-0025">Alternative splicing</keyword>
<keyword id="KW-0963">Cytoplasm</keyword>
<keyword id="KW-0341">Growth regulation</keyword>
<keyword id="KW-0539">Nucleus</keyword>
<keyword id="KW-0597">Phosphoprotein</keyword>
<keyword id="KW-0675">Receptor</keyword>
<keyword id="KW-1185">Reference proteome</keyword>
<keyword id="KW-0677">Repeat</keyword>
<evidence type="ECO:0000250" key="1"/>
<evidence type="ECO:0000250" key="2">
    <source>
        <dbReference type="UniProtKB" id="Q9NZT2"/>
    </source>
</evidence>
<evidence type="ECO:0000255" key="3"/>
<evidence type="ECO:0000256" key="4">
    <source>
        <dbReference type="SAM" id="MobiDB-lite"/>
    </source>
</evidence>
<evidence type="ECO:0000303" key="5">
    <source>
    </source>
</evidence>
<evidence type="ECO:0000305" key="6"/>
<evidence type="ECO:0007744" key="7">
    <source>
    </source>
</evidence>
<feature type="chain" id="PRO_0000058031" description="Opioid growth factor receptor">
    <location>
        <begin position="1"/>
        <end position="633"/>
    </location>
</feature>
<feature type="repeat" description="1">
    <location>
        <begin position="467"/>
        <end position="475"/>
    </location>
</feature>
<feature type="repeat" description="2">
    <location>
        <begin position="476"/>
        <end position="484"/>
    </location>
</feature>
<feature type="repeat" description="3">
    <location>
        <begin position="485"/>
        <end position="493"/>
    </location>
</feature>
<feature type="repeat" description="4">
    <location>
        <begin position="494"/>
        <end position="502"/>
    </location>
</feature>
<feature type="repeat" description="5">
    <location>
        <begin position="503"/>
        <end position="511"/>
    </location>
</feature>
<feature type="repeat" description="6">
    <location>
        <begin position="512"/>
        <end position="520"/>
    </location>
</feature>
<feature type="repeat" description="7">
    <location>
        <begin position="521"/>
        <end position="529"/>
    </location>
</feature>
<feature type="repeat" description="8">
    <location>
        <begin position="530"/>
        <end position="538"/>
    </location>
</feature>
<feature type="repeat" description="9">
    <location>
        <begin position="539"/>
        <end position="547"/>
    </location>
</feature>
<feature type="repeat" description="10">
    <location>
        <begin position="548"/>
        <end position="556"/>
    </location>
</feature>
<feature type="repeat" description="11">
    <location>
        <begin position="557"/>
        <end position="565"/>
    </location>
</feature>
<feature type="repeat" description="12">
    <location>
        <begin position="566"/>
        <end position="574"/>
    </location>
</feature>
<feature type="repeat" description="13">
    <location>
        <begin position="575"/>
        <end position="583"/>
    </location>
</feature>
<feature type="repeat" description="14">
    <location>
        <begin position="584"/>
        <end position="592"/>
    </location>
</feature>
<feature type="region of interest" description="Disordered" evidence="4">
    <location>
        <begin position="1"/>
        <end position="44"/>
    </location>
</feature>
<feature type="region of interest" description="Disordered" evidence="4">
    <location>
        <begin position="287"/>
        <end position="390"/>
    </location>
</feature>
<feature type="region of interest" description="Disordered" evidence="4">
    <location>
        <begin position="404"/>
        <end position="633"/>
    </location>
</feature>
<feature type="region of interest" description="14 X approximate tandem repeats">
    <location>
        <begin position="467"/>
        <end position="592"/>
    </location>
</feature>
<feature type="short sequence motif" description="Bipartite nuclear localization signal" evidence="3">
    <location>
        <begin position="257"/>
        <end position="286"/>
    </location>
</feature>
<feature type="compositionally biased region" description="Acidic residues" evidence="4">
    <location>
        <begin position="1"/>
        <end position="38"/>
    </location>
</feature>
<feature type="compositionally biased region" description="Basic and acidic residues" evidence="4">
    <location>
        <begin position="351"/>
        <end position="374"/>
    </location>
</feature>
<feature type="compositionally biased region" description="Polar residues" evidence="4">
    <location>
        <begin position="441"/>
        <end position="455"/>
    </location>
</feature>
<feature type="compositionally biased region" description="Basic and acidic residues" evidence="4">
    <location>
        <begin position="505"/>
        <end position="517"/>
    </location>
</feature>
<feature type="compositionally biased region" description="Basic and acidic residues" evidence="4">
    <location>
        <begin position="550"/>
        <end position="580"/>
    </location>
</feature>
<feature type="modified residue" description="N-acetylmethionine" evidence="2">
    <location>
        <position position="1"/>
    </location>
</feature>
<feature type="modified residue" description="Phosphoserine" evidence="7">
    <location>
        <position position="327"/>
    </location>
</feature>
<feature type="modified residue" description="Phosphoserine" evidence="2">
    <location>
        <position position="340"/>
    </location>
</feature>
<feature type="modified residue" description="Phosphoserine" evidence="2">
    <location>
        <position position="361"/>
    </location>
</feature>
<feature type="modified residue" description="Phosphoserine" evidence="2">
    <location>
        <position position="365"/>
    </location>
</feature>
<feature type="modified residue" description="Phosphoserine" evidence="2">
    <location>
        <position position="403"/>
    </location>
</feature>
<feature type="modified residue" description="Phosphoserine" evidence="2">
    <location>
        <position position="452"/>
    </location>
</feature>
<feature type="modified residue" description="Phosphoserine" evidence="7">
    <location>
        <position position="601"/>
    </location>
</feature>
<feature type="modified residue" description="Phosphoserine" evidence="7">
    <location>
        <position position="608"/>
    </location>
</feature>
<feature type="splice variant" id="VSP_004061" description="In isoform 2." evidence="5">
    <location>
        <begin position="504"/>
        <end position="512"/>
    </location>
</feature>
<feature type="splice variant" id="VSP_004062" description="In isoform 2." evidence="5">
    <location>
        <begin position="563"/>
        <end position="589"/>
    </location>
</feature>
<feature type="sequence conflict" description="In Ref. 3; AAH03875." evidence="6" ref="3">
    <original>E</original>
    <variation>D</variation>
    <location>
        <position position="19"/>
    </location>
</feature>
<feature type="sequence conflict" description="In Ref. 3; AAH03875." evidence="6" ref="3">
    <original>GR</original>
    <variation>SW</variation>
    <location>
        <begin position="317"/>
        <end position="318"/>
    </location>
</feature>
<dbReference type="EMBL" id="AF303894">
    <property type="protein sequence ID" value="AAK01353.1"/>
    <property type="molecule type" value="mRNA"/>
</dbReference>
<dbReference type="EMBL" id="AL669926">
    <property type="status" value="NOT_ANNOTATED_CDS"/>
    <property type="molecule type" value="Genomic_DNA"/>
</dbReference>
<dbReference type="EMBL" id="BC003875">
    <property type="protein sequence ID" value="AAH03875.1"/>
    <property type="molecule type" value="mRNA"/>
</dbReference>
<dbReference type="CCDS" id="CCDS17179.1">
    <molecule id="Q99PG2-1"/>
</dbReference>
<dbReference type="RefSeq" id="NP_113550.3">
    <molecule id="Q99PG2-1"/>
    <property type="nucleotide sequence ID" value="NM_031373.3"/>
</dbReference>
<dbReference type="BioGRID" id="215132">
    <property type="interactions" value="3"/>
</dbReference>
<dbReference type="FunCoup" id="Q99PG2">
    <property type="interactions" value="643"/>
</dbReference>
<dbReference type="STRING" id="10090.ENSMUSP00000029087"/>
<dbReference type="GlyGen" id="Q99PG2">
    <property type="glycosylation" value="2 sites, 1 O-linked glycan (1 site)"/>
</dbReference>
<dbReference type="iPTMnet" id="Q99PG2"/>
<dbReference type="PhosphoSitePlus" id="Q99PG2"/>
<dbReference type="jPOST" id="Q99PG2"/>
<dbReference type="PaxDb" id="10090-ENSMUSP00000029087"/>
<dbReference type="PeptideAtlas" id="Q99PG2"/>
<dbReference type="ProteomicsDB" id="289968">
    <molecule id="Q99PG2-1"/>
</dbReference>
<dbReference type="ProteomicsDB" id="289969">
    <molecule id="Q99PG2-2"/>
</dbReference>
<dbReference type="Pumba" id="Q99PG2"/>
<dbReference type="Antibodypedia" id="14927">
    <property type="antibodies" value="170 antibodies from 29 providers"/>
</dbReference>
<dbReference type="DNASU" id="72075"/>
<dbReference type="Ensembl" id="ENSMUST00000029087.4">
    <molecule id="Q99PG2-1"/>
    <property type="protein sequence ID" value="ENSMUSP00000029087.4"/>
    <property type="gene ID" value="ENSMUSG00000049401.11"/>
</dbReference>
<dbReference type="GeneID" id="72075"/>
<dbReference type="KEGG" id="mmu:72075"/>
<dbReference type="UCSC" id="uc008ojj.2">
    <molecule id="Q99PG2-1"/>
    <property type="organism name" value="mouse"/>
</dbReference>
<dbReference type="UCSC" id="uc008ojk.2">
    <molecule id="Q99PG2-2"/>
    <property type="organism name" value="mouse"/>
</dbReference>
<dbReference type="AGR" id="MGI:1919325"/>
<dbReference type="CTD" id="11054"/>
<dbReference type="MGI" id="MGI:1919325">
    <property type="gene designation" value="Ogfr"/>
</dbReference>
<dbReference type="VEuPathDB" id="HostDB:ENSMUSG00000049401"/>
<dbReference type="eggNOG" id="ENOG502QVIF">
    <property type="taxonomic scope" value="Eukaryota"/>
</dbReference>
<dbReference type="GeneTree" id="ENSGT00390000018730"/>
<dbReference type="HOGENOM" id="CLU_025735_1_0_1"/>
<dbReference type="InParanoid" id="Q99PG2"/>
<dbReference type="OMA" id="LHFAWEH"/>
<dbReference type="OrthoDB" id="9030204at2759"/>
<dbReference type="PhylomeDB" id="Q99PG2"/>
<dbReference type="TreeFam" id="TF331377"/>
<dbReference type="BioGRID-ORCS" id="72075">
    <property type="hits" value="2 hits in 77 CRISPR screens"/>
</dbReference>
<dbReference type="PRO" id="PR:Q99PG2"/>
<dbReference type="Proteomes" id="UP000000589">
    <property type="component" value="Chromosome 2"/>
</dbReference>
<dbReference type="RNAct" id="Q99PG2">
    <property type="molecule type" value="protein"/>
</dbReference>
<dbReference type="Bgee" id="ENSMUSG00000049401">
    <property type="expression patterns" value="Expressed in embryonic brain and 267 other cell types or tissues"/>
</dbReference>
<dbReference type="GO" id="GO:0005737">
    <property type="term" value="C:cytoplasm"/>
    <property type="evidence" value="ECO:0007669"/>
    <property type="project" value="UniProtKB-SubCell"/>
</dbReference>
<dbReference type="GO" id="GO:0016020">
    <property type="term" value="C:membrane"/>
    <property type="evidence" value="ECO:0007669"/>
    <property type="project" value="InterPro"/>
</dbReference>
<dbReference type="GO" id="GO:0005634">
    <property type="term" value="C:nucleus"/>
    <property type="evidence" value="ECO:0007669"/>
    <property type="project" value="UniProtKB-SubCell"/>
</dbReference>
<dbReference type="GO" id="GO:0140625">
    <property type="term" value="F:opioid growth factor receptor activity"/>
    <property type="evidence" value="ECO:0007669"/>
    <property type="project" value="InterPro"/>
</dbReference>
<dbReference type="InterPro" id="IPR006757">
    <property type="entry name" value="OGF_rcpt"/>
</dbReference>
<dbReference type="InterPro" id="IPR039574">
    <property type="entry name" value="OGFr"/>
</dbReference>
<dbReference type="PANTHER" id="PTHR14015:SF1">
    <property type="entry name" value="OPIOID GROWTH FACTOR RECEPTOR"/>
    <property type="match status" value="1"/>
</dbReference>
<dbReference type="PANTHER" id="PTHR14015">
    <property type="entry name" value="OPIOID GROWTH FACTOR RECEPTOR OGFR ZETA-TYPE OPIOID RECEPTOR"/>
    <property type="match status" value="1"/>
</dbReference>
<dbReference type="Pfam" id="PF04664">
    <property type="entry name" value="OGFr_N"/>
    <property type="match status" value="1"/>
</dbReference>
<reference key="1">
    <citation type="journal article" date="2000" name="Brain Res. Mol. Brain Res.">
        <title>Molecular characterization and distribution of the opioid growth factor receptor (OGFr) in mouse.</title>
        <authorList>
            <person name="Zagon I.S."/>
            <person name="Verderame M.F."/>
            <person name="Zimmer W.E."/>
            <person name="McLaughlin P.J."/>
        </authorList>
    </citation>
    <scope>NUCLEOTIDE SEQUENCE [MRNA] (ISOFORM 1)</scope>
    <source>
        <strain>C57BL/6J</strain>
    </source>
</reference>
<reference key="2">
    <citation type="journal article" date="2009" name="PLoS Biol.">
        <title>Lineage-specific biology revealed by a finished genome assembly of the mouse.</title>
        <authorList>
            <person name="Church D.M."/>
            <person name="Goodstadt L."/>
            <person name="Hillier L.W."/>
            <person name="Zody M.C."/>
            <person name="Goldstein S."/>
            <person name="She X."/>
            <person name="Bult C.J."/>
            <person name="Agarwala R."/>
            <person name="Cherry J.L."/>
            <person name="DiCuccio M."/>
            <person name="Hlavina W."/>
            <person name="Kapustin Y."/>
            <person name="Meric P."/>
            <person name="Maglott D."/>
            <person name="Birtle Z."/>
            <person name="Marques A.C."/>
            <person name="Graves T."/>
            <person name="Zhou S."/>
            <person name="Teague B."/>
            <person name="Potamousis K."/>
            <person name="Churas C."/>
            <person name="Place M."/>
            <person name="Herschleb J."/>
            <person name="Runnheim R."/>
            <person name="Forrest D."/>
            <person name="Amos-Landgraf J."/>
            <person name="Schwartz D.C."/>
            <person name="Cheng Z."/>
            <person name="Lindblad-Toh K."/>
            <person name="Eichler E.E."/>
            <person name="Ponting C.P."/>
        </authorList>
    </citation>
    <scope>NUCLEOTIDE SEQUENCE [LARGE SCALE GENOMIC DNA]</scope>
    <source>
        <strain>C57BL/6J</strain>
    </source>
</reference>
<reference key="3">
    <citation type="journal article" date="2004" name="Genome Res.">
        <title>The status, quality, and expansion of the NIH full-length cDNA project: the Mammalian Gene Collection (MGC).</title>
        <authorList>
            <consortium name="The MGC Project Team"/>
        </authorList>
    </citation>
    <scope>NUCLEOTIDE SEQUENCE [LARGE SCALE MRNA] (ISOFORM 2)</scope>
</reference>
<reference key="4">
    <citation type="journal article" date="2010" name="Cell">
        <title>A tissue-specific atlas of mouse protein phosphorylation and expression.</title>
        <authorList>
            <person name="Huttlin E.L."/>
            <person name="Jedrychowski M.P."/>
            <person name="Elias J.E."/>
            <person name="Goswami T."/>
            <person name="Rad R."/>
            <person name="Beausoleil S.A."/>
            <person name="Villen J."/>
            <person name="Haas W."/>
            <person name="Sowa M.E."/>
            <person name="Gygi S.P."/>
        </authorList>
    </citation>
    <scope>PHOSPHORYLATION [LARGE SCALE ANALYSIS] AT SER-327; SER-601 AND SER-608</scope>
    <scope>IDENTIFICATION BY MASS SPECTROMETRY [LARGE SCALE ANALYSIS]</scope>
    <source>
        <tissue>Brain</tissue>
        <tissue>Brown adipose tissue</tissue>
        <tissue>Heart</tissue>
        <tissue>Liver</tissue>
        <tissue>Lung</tissue>
        <tissue>Pancreas</tissue>
        <tissue>Spleen</tissue>
        <tissue>Testis</tissue>
    </source>
</reference>
<organism>
    <name type="scientific">Mus musculus</name>
    <name type="common">Mouse</name>
    <dbReference type="NCBI Taxonomy" id="10090"/>
    <lineage>
        <taxon>Eukaryota</taxon>
        <taxon>Metazoa</taxon>
        <taxon>Chordata</taxon>
        <taxon>Craniata</taxon>
        <taxon>Vertebrata</taxon>
        <taxon>Euteleostomi</taxon>
        <taxon>Mammalia</taxon>
        <taxon>Eutheria</taxon>
        <taxon>Euarchontoglires</taxon>
        <taxon>Glires</taxon>
        <taxon>Rodentia</taxon>
        <taxon>Myomorpha</taxon>
        <taxon>Muroidea</taxon>
        <taxon>Muridae</taxon>
        <taxon>Murinae</taxon>
        <taxon>Mus</taxon>
        <taxon>Mus</taxon>
    </lineage>
</organism>
<gene>
    <name type="primary">Ogfr</name>
</gene>
<accession>Q99PG2</accession>
<accession>A2ACT6</accession>
<accession>Q99L33</accession>
<name>OGFR_MOUSE</name>
<comment type="function">
    <text evidence="1">Receptor for opioid growth factor (OGF), also known as Met-enkephalin. Seems to be involved in growth regulation (By similarity).</text>
</comment>
<comment type="subcellular location">
    <subcellularLocation>
        <location evidence="1">Cytoplasm</location>
    </subcellularLocation>
    <subcellularLocation>
        <location evidence="1">Nucleus</location>
    </subcellularLocation>
    <text>The OGF/OGFR complex is probably translocated to the nucleus.</text>
</comment>
<comment type="alternative products">
    <event type="alternative splicing"/>
    <isoform>
        <id>Q99PG2-1</id>
        <name>1</name>
        <sequence type="displayed"/>
    </isoform>
    <isoform>
        <id>Q99PG2-2</id>
        <name>2</name>
        <sequence type="described" ref="VSP_004061 VSP_004062"/>
    </isoform>
</comment>
<comment type="tissue specificity">
    <text>Expressed in all tissues examined, including brain, heart, lung, liver, kidney and skeletal muscle.</text>
</comment>
<comment type="similarity">
    <text evidence="6">Belongs to the opioid growth factor receptor family.</text>
</comment>